<evidence type="ECO:0000255" key="1">
    <source>
        <dbReference type="HAMAP-Rule" id="MF_01358"/>
    </source>
</evidence>
<organism>
    <name type="scientific">Rhodobacter capsulatus</name>
    <name type="common">Rhodopseudomonas capsulata</name>
    <dbReference type="NCBI Taxonomy" id="1061"/>
    <lineage>
        <taxon>Bacteria</taxon>
        <taxon>Pseudomonadati</taxon>
        <taxon>Pseudomonadota</taxon>
        <taxon>Alphaproteobacteria</taxon>
        <taxon>Rhodobacterales</taxon>
        <taxon>Rhodobacter group</taxon>
        <taxon>Rhodobacter</taxon>
    </lineage>
</organism>
<keyword id="KW-0997">Cell inner membrane</keyword>
<keyword id="KW-1003">Cell membrane</keyword>
<keyword id="KW-0472">Membrane</keyword>
<keyword id="KW-0520">NAD</keyword>
<keyword id="KW-0874">Quinone</keyword>
<keyword id="KW-1278">Translocase</keyword>
<keyword id="KW-0813">Transport</keyword>
<keyword id="KW-0830">Ubiquinone</keyword>
<sequence length="413" mass="46449">MDGDIRHNSYDDGSEDVLTGEQSIRNFNINFGPQHPAAHGVLRMVLELDGEIVERADPHIGLLHRGTEKLMESRTYLQNTPYFDRLDYVAPMNQEHAWCLAIEKLTGTAVPRRASIIRVLFSEIGRILNHLLNVTTQAMDVGALTPPLWGFEEREKLMIFYERACGARLHANYFRPGGVHQDLPPDLIDDIEIWAKAFPQVLDDIEGLLTENRIFKQRNADICIITEAEIEKWGYSGVMVRGSGLAWDLRRAQPYECYDEFDFKVAVGKNGDCYDRYLVRMAEMRESTKIILQACAKLRAPDGQGDILARGKLTPPKRAEMKTSMEALIHHFKLYTEGFKVPAGEVYAAVEAPKGEFGVYLVADGTNKPYRAKIRAPGYAHLQSIDAVAKGHQLADVSAIIGTMDVVFGEIDR</sequence>
<reference key="1">
    <citation type="submission" date="1997-10" db="EMBL/GenBank/DDBJ databases">
        <authorList>
            <person name="Dupuis A."/>
            <person name="Issartel J.P."/>
        </authorList>
    </citation>
    <scope>NUCLEOTIDE SEQUENCE [GENOMIC DNA]</scope>
    <source>
        <strain>ATCC 33303 / B10</strain>
    </source>
</reference>
<reference key="2">
    <citation type="journal article" date="1997" name="Eur. J. Biochem.">
        <title>Protein and gene structure of the NADH-binding fragment of Rhodobacter capsulatus NADH:ubiquinone oxidoreductase.</title>
        <authorList>
            <person name="Herter S.M."/>
            <person name="Schiltz E."/>
            <person name="Drews G."/>
        </authorList>
    </citation>
    <scope>NUCLEOTIDE SEQUENCE [GENOMIC DNA] OF 356-413</scope>
</reference>
<protein>
    <recommendedName>
        <fullName evidence="1">NADH-quinone oxidoreductase subunit D</fullName>
        <ecNumber evidence="1">7.1.1.-</ecNumber>
    </recommendedName>
    <alternativeName>
        <fullName evidence="1">NADH dehydrogenase I subunit D</fullName>
    </alternativeName>
    <alternativeName>
        <fullName evidence="1">NDH-1 subunit D</fullName>
    </alternativeName>
</protein>
<proteinExistence type="inferred from homology"/>
<accession>O07310</accession>
<name>NUOD_RHOCA</name>
<comment type="function">
    <text>NDH-1 shuttles electrons from NADH, via FMN and iron-sulfur (Fe-S) centers, to quinones in the respiratory chain. The immediate electron acceptor for the enzyme in this species is believed to be ubiquinone. Couples the redox reaction to proton translocation (for every two electrons transferred, four hydrogen ions are translocated across the cytoplasmic membrane), and thus conserves the redox energy in a proton gradient.</text>
</comment>
<comment type="catalytic activity">
    <reaction evidence="1">
        <text>a quinone + NADH + 5 H(+)(in) = a quinol + NAD(+) + 4 H(+)(out)</text>
        <dbReference type="Rhea" id="RHEA:57888"/>
        <dbReference type="ChEBI" id="CHEBI:15378"/>
        <dbReference type="ChEBI" id="CHEBI:24646"/>
        <dbReference type="ChEBI" id="CHEBI:57540"/>
        <dbReference type="ChEBI" id="CHEBI:57945"/>
        <dbReference type="ChEBI" id="CHEBI:132124"/>
    </reaction>
</comment>
<comment type="subunit">
    <text evidence="1">NDH-1 is composed of 14 different subunits. Subunits NuoB, C, D, E, F, and G constitute the peripheral sector of the complex.</text>
</comment>
<comment type="subcellular location">
    <subcellularLocation>
        <location evidence="1">Cell inner membrane</location>
        <topology evidence="1">Peripheral membrane protein</topology>
        <orientation evidence="1">Cytoplasmic side</orientation>
    </subcellularLocation>
</comment>
<comment type="similarity">
    <text evidence="1">Belongs to the complex I 49 kDa subunit family.</text>
</comment>
<feature type="chain" id="PRO_0000118624" description="NADH-quinone oxidoreductase subunit D">
    <location>
        <begin position="1"/>
        <end position="413"/>
    </location>
</feature>
<gene>
    <name evidence="1" type="primary">nuoD</name>
</gene>
<dbReference type="EC" id="7.1.1.-" evidence="1"/>
<dbReference type="EMBL" id="AF029365">
    <property type="protein sequence ID" value="AAC24988.1"/>
    <property type="molecule type" value="Genomic_DNA"/>
</dbReference>
<dbReference type="EMBL" id="Y09884">
    <property type="protein sequence ID" value="CAA71010.1"/>
    <property type="molecule type" value="Genomic_DNA"/>
</dbReference>
<dbReference type="RefSeq" id="WP_013067244.1">
    <property type="nucleotide sequence ID" value="NZ_VIBE01000008.1"/>
</dbReference>
<dbReference type="SMR" id="O07310"/>
<dbReference type="OMA" id="TRMDYLT"/>
<dbReference type="GO" id="GO:0005886">
    <property type="term" value="C:plasma membrane"/>
    <property type="evidence" value="ECO:0007669"/>
    <property type="project" value="UniProtKB-SubCell"/>
</dbReference>
<dbReference type="GO" id="GO:0051287">
    <property type="term" value="F:NAD binding"/>
    <property type="evidence" value="ECO:0007669"/>
    <property type="project" value="InterPro"/>
</dbReference>
<dbReference type="GO" id="GO:0050136">
    <property type="term" value="F:NADH:ubiquinone reductase (non-electrogenic) activity"/>
    <property type="evidence" value="ECO:0007669"/>
    <property type="project" value="UniProtKB-UniRule"/>
</dbReference>
<dbReference type="GO" id="GO:0048038">
    <property type="term" value="F:quinone binding"/>
    <property type="evidence" value="ECO:0007669"/>
    <property type="project" value="UniProtKB-KW"/>
</dbReference>
<dbReference type="FunFam" id="1.10.645.10:FF:000005">
    <property type="entry name" value="NADH-quinone oxidoreductase subunit D"/>
    <property type="match status" value="1"/>
</dbReference>
<dbReference type="Gene3D" id="1.10.645.10">
    <property type="entry name" value="Cytochrome-c3 Hydrogenase, chain B"/>
    <property type="match status" value="1"/>
</dbReference>
<dbReference type="HAMAP" id="MF_01358">
    <property type="entry name" value="NDH1_NuoD"/>
    <property type="match status" value="1"/>
</dbReference>
<dbReference type="InterPro" id="IPR001135">
    <property type="entry name" value="NADH_Q_OxRdtase_suD"/>
</dbReference>
<dbReference type="InterPro" id="IPR014029">
    <property type="entry name" value="NADH_UbQ_OxRdtase_49kDa_CS"/>
</dbReference>
<dbReference type="InterPro" id="IPR022885">
    <property type="entry name" value="NDH1_su_D/H"/>
</dbReference>
<dbReference type="InterPro" id="IPR029014">
    <property type="entry name" value="NiFe-Hase_large"/>
</dbReference>
<dbReference type="NCBIfam" id="TIGR01962">
    <property type="entry name" value="NuoD"/>
    <property type="match status" value="1"/>
</dbReference>
<dbReference type="NCBIfam" id="NF004739">
    <property type="entry name" value="PRK06075.1"/>
    <property type="match status" value="1"/>
</dbReference>
<dbReference type="PANTHER" id="PTHR11993:SF10">
    <property type="entry name" value="NADH DEHYDROGENASE [UBIQUINONE] IRON-SULFUR PROTEIN 2, MITOCHONDRIAL"/>
    <property type="match status" value="1"/>
</dbReference>
<dbReference type="PANTHER" id="PTHR11993">
    <property type="entry name" value="NADH-UBIQUINONE OXIDOREDUCTASE 49 KDA SUBUNIT"/>
    <property type="match status" value="1"/>
</dbReference>
<dbReference type="Pfam" id="PF00346">
    <property type="entry name" value="Complex1_49kDa"/>
    <property type="match status" value="1"/>
</dbReference>
<dbReference type="SUPFAM" id="SSF56762">
    <property type="entry name" value="HydB/Nqo4-like"/>
    <property type="match status" value="1"/>
</dbReference>
<dbReference type="PROSITE" id="PS00535">
    <property type="entry name" value="COMPLEX1_49K"/>
    <property type="match status" value="1"/>
</dbReference>